<dbReference type="EC" id="4.6.1.18"/>
<dbReference type="EMBL" id="AF449638">
    <property type="protein sequence ID" value="AAL87059.1"/>
    <property type="molecule type" value="Genomic_DNA"/>
</dbReference>
<dbReference type="SMR" id="Q8SQ07"/>
<dbReference type="GlyCosmos" id="Q8SQ07">
    <property type="glycosylation" value="2 sites, No reported glycans"/>
</dbReference>
<dbReference type="GO" id="GO:0005576">
    <property type="term" value="C:extracellular region"/>
    <property type="evidence" value="ECO:0007669"/>
    <property type="project" value="UniProtKB-SubCell"/>
</dbReference>
<dbReference type="GO" id="GO:0016829">
    <property type="term" value="F:lyase activity"/>
    <property type="evidence" value="ECO:0007669"/>
    <property type="project" value="UniProtKB-KW"/>
</dbReference>
<dbReference type="GO" id="GO:0003676">
    <property type="term" value="F:nucleic acid binding"/>
    <property type="evidence" value="ECO:0007669"/>
    <property type="project" value="InterPro"/>
</dbReference>
<dbReference type="GO" id="GO:0004522">
    <property type="term" value="F:ribonuclease A activity"/>
    <property type="evidence" value="ECO:0007669"/>
    <property type="project" value="UniProtKB-EC"/>
</dbReference>
<dbReference type="GO" id="GO:0050830">
    <property type="term" value="P:defense response to Gram-positive bacterium"/>
    <property type="evidence" value="ECO:0007669"/>
    <property type="project" value="TreeGrafter"/>
</dbReference>
<dbReference type="CDD" id="cd06265">
    <property type="entry name" value="RNase_A_canonical"/>
    <property type="match status" value="1"/>
</dbReference>
<dbReference type="FunFam" id="3.10.130.10:FF:000001">
    <property type="entry name" value="Ribonuclease pancreatic"/>
    <property type="match status" value="1"/>
</dbReference>
<dbReference type="Gene3D" id="3.10.130.10">
    <property type="entry name" value="Ribonuclease A-like domain"/>
    <property type="match status" value="1"/>
</dbReference>
<dbReference type="InterPro" id="IPR001427">
    <property type="entry name" value="RNaseA"/>
</dbReference>
<dbReference type="InterPro" id="IPR036816">
    <property type="entry name" value="RNaseA-like_dom_sf"/>
</dbReference>
<dbReference type="InterPro" id="IPR023411">
    <property type="entry name" value="RNaseA_AS"/>
</dbReference>
<dbReference type="InterPro" id="IPR023412">
    <property type="entry name" value="RNaseA_domain"/>
</dbReference>
<dbReference type="PANTHER" id="PTHR11437">
    <property type="entry name" value="RIBONUCLEASE"/>
    <property type="match status" value="1"/>
</dbReference>
<dbReference type="PANTHER" id="PTHR11437:SF24">
    <property type="entry name" value="RIBONUCLEASE PANCREATIC"/>
    <property type="match status" value="1"/>
</dbReference>
<dbReference type="Pfam" id="PF00074">
    <property type="entry name" value="RnaseA"/>
    <property type="match status" value="1"/>
</dbReference>
<dbReference type="PRINTS" id="PR00794">
    <property type="entry name" value="RIBONUCLEASE"/>
</dbReference>
<dbReference type="SMART" id="SM00092">
    <property type="entry name" value="RNAse_Pc"/>
    <property type="match status" value="1"/>
</dbReference>
<dbReference type="SUPFAM" id="SSF54076">
    <property type="entry name" value="RNase A-like"/>
    <property type="match status" value="1"/>
</dbReference>
<dbReference type="PROSITE" id="PS00127">
    <property type="entry name" value="RNASE_PANCREATIC"/>
    <property type="match status" value="1"/>
</dbReference>
<feature type="signal peptide" evidence="1">
    <location>
        <begin position="1"/>
        <end position="28"/>
    </location>
</feature>
<feature type="chain" id="PRO_0000030942" description="Ribonuclease pancreatic">
    <location>
        <begin position="29"/>
        <end position="156"/>
    </location>
</feature>
<feature type="region of interest" description="Disordered" evidence="3">
    <location>
        <begin position="33"/>
        <end position="52"/>
    </location>
</feature>
<feature type="compositionally biased region" description="Basic and acidic residues" evidence="3">
    <location>
        <begin position="33"/>
        <end position="43"/>
    </location>
</feature>
<feature type="active site" description="Proton acceptor" evidence="1">
    <location>
        <position position="40"/>
    </location>
</feature>
<feature type="active site" description="Proton donor" evidence="1">
    <location>
        <position position="147"/>
    </location>
</feature>
<feature type="binding site" evidence="1">
    <location>
        <position position="35"/>
    </location>
    <ligand>
        <name>substrate</name>
    </ligand>
</feature>
<feature type="binding site" evidence="1">
    <location>
        <position position="38"/>
    </location>
    <ligand>
        <name>substrate</name>
    </ligand>
</feature>
<feature type="binding site" evidence="1">
    <location>
        <begin position="69"/>
        <end position="73"/>
    </location>
    <ligand>
        <name>substrate</name>
    </ligand>
</feature>
<feature type="binding site" evidence="1">
    <location>
        <position position="94"/>
    </location>
    <ligand>
        <name>substrate</name>
    </ligand>
</feature>
<feature type="binding site" evidence="1">
    <location>
        <position position="113"/>
    </location>
    <ligand>
        <name>substrate</name>
    </ligand>
</feature>
<feature type="glycosylation site" description="N-linked (GlcNAc...) asparagine" evidence="2">
    <location>
        <position position="62"/>
    </location>
</feature>
<feature type="glycosylation site" description="N-linked (GlcNAc...) asparagine" evidence="2">
    <location>
        <position position="116"/>
    </location>
</feature>
<feature type="disulfide bond" evidence="1">
    <location>
        <begin position="54"/>
        <end position="112"/>
    </location>
</feature>
<feature type="disulfide bond" evidence="1">
    <location>
        <begin position="68"/>
        <end position="123"/>
    </location>
</feature>
<feature type="disulfide bond" evidence="1">
    <location>
        <begin position="86"/>
        <end position="138"/>
    </location>
</feature>
<feature type="disulfide bond" evidence="1">
    <location>
        <begin position="93"/>
        <end position="100"/>
    </location>
</feature>
<organism>
    <name type="scientific">Saguinus oedipus</name>
    <name type="common">Cotton-top tamarin</name>
    <dbReference type="NCBI Taxonomy" id="9490"/>
    <lineage>
        <taxon>Eukaryota</taxon>
        <taxon>Metazoa</taxon>
        <taxon>Chordata</taxon>
        <taxon>Craniata</taxon>
        <taxon>Vertebrata</taxon>
        <taxon>Euteleostomi</taxon>
        <taxon>Mammalia</taxon>
        <taxon>Eutheria</taxon>
        <taxon>Euarchontoglires</taxon>
        <taxon>Primates</taxon>
        <taxon>Haplorrhini</taxon>
        <taxon>Platyrrhini</taxon>
        <taxon>Cebidae</taxon>
        <taxon>Callitrichinae</taxon>
        <taxon>Saguinus</taxon>
    </lineage>
</organism>
<evidence type="ECO:0000250" key="1"/>
<evidence type="ECO:0000255" key="2"/>
<evidence type="ECO:0000256" key="3">
    <source>
        <dbReference type="SAM" id="MobiDB-lite"/>
    </source>
</evidence>
<evidence type="ECO:0000305" key="4"/>
<proteinExistence type="inferred from homology"/>
<accession>Q8SQ07</accession>
<keyword id="KW-1015">Disulfide bond</keyword>
<keyword id="KW-0255">Endonuclease</keyword>
<keyword id="KW-0325">Glycoprotein</keyword>
<keyword id="KW-0378">Hydrolase</keyword>
<keyword id="KW-0456">Lyase</keyword>
<keyword id="KW-0540">Nuclease</keyword>
<keyword id="KW-0964">Secreted</keyword>
<keyword id="KW-0732">Signal</keyword>
<gene>
    <name type="primary">RNASE1</name>
    <name type="synonym">RNS1</name>
</gene>
<sequence length="156" mass="17627">MALEKSLALLPLLVLVLLVLGWVQPSLGKESRAQKFQRQHMDSDGSPSSNPTYCNNMMRRRNMTQGRCKPVNTFVHEPLVDVQDVCFQEKVTCKNGQPNCYKSSSSMRITDCRLTNGSRYPNCAYRTSQKERHIIVACEGNPYVPVHFDASVEDST</sequence>
<protein>
    <recommendedName>
        <fullName>Ribonuclease pancreatic</fullName>
        <ecNumber>4.6.1.18</ecNumber>
    </recommendedName>
    <alternativeName>
        <fullName>RNase 1</fullName>
    </alternativeName>
    <alternativeName>
        <fullName>RNase A</fullName>
    </alternativeName>
</protein>
<name>RNAS1_SAGOE</name>
<reference key="1">
    <citation type="journal article" date="2002" name="Nat. Genet.">
        <title>Adaptive evolution of a duplicated pancreatic ribonuclease gene in a leaf-eating monkey.</title>
        <authorList>
            <person name="Zhang J."/>
            <person name="Zhang Y.-P."/>
            <person name="Rosenberg H.F."/>
        </authorList>
    </citation>
    <scope>NUCLEOTIDE SEQUENCE [GENOMIC DNA]</scope>
</reference>
<comment type="function">
    <text evidence="1">Endonuclease that catalyzes the cleavage of RNA on the 3' side of pyrimidine nucleotides. Acts on single-stranded and double-stranded RNA (By similarity).</text>
</comment>
<comment type="catalytic activity">
    <reaction>
        <text>an [RNA] containing cytidine + H2O = an [RNA]-3'-cytidine-3'-phosphate + a 5'-hydroxy-ribonucleotide-3'-[RNA].</text>
        <dbReference type="EC" id="4.6.1.18"/>
    </reaction>
</comment>
<comment type="catalytic activity">
    <reaction>
        <text>an [RNA] containing uridine + H2O = an [RNA]-3'-uridine-3'-phosphate + a 5'-hydroxy-ribonucleotide-3'-[RNA].</text>
        <dbReference type="EC" id="4.6.1.18"/>
    </reaction>
</comment>
<comment type="subunit">
    <text evidence="1">Monomer. Interacts with and forms tight 1:1 complexes with RNH1. Dimerization of two such complexes may occur. Interaction with RNH1 inhibits this protein (By similarity).</text>
</comment>
<comment type="subcellular location">
    <subcellularLocation>
        <location evidence="1">Secreted</location>
    </subcellularLocation>
</comment>
<comment type="similarity">
    <text evidence="4">Belongs to the pancreatic ribonuclease family.</text>
</comment>